<sequence length="392" mass="43796">MTRPFNRVHLIVMDSVGIGEAPDAADFKDEGSHTLRHTLEGFDQTLPNLEKLGLGNIDKLPVVNAVEQPEAYYTKLSEASVGKDTMTGHWEIMGLNIMQPFKVYPNGFPEELIQQIEEMTGRKVVANKPASGTQIIDEWGEHQMKTGDLIVYTSADPVLQIAAHEDIIPLEELYDICEKVRELTKDPKYLIGRIIARPYVGEPGNFTRTSNRHDYALKPFGKTVLDHLKDGGYDVIAIGKINDIYDGEGVTEAVRTKSNMDGMDQLMKIVKKDFTGISFLNLVDFDALYGHRRDKPGYAQAIKDFDDRLPELFSNLKEDDLVIITADHGNDPTAPGTDHTREYIPVIMYSPKFKGGHALESDTTFSSIGATIADNFNVTLPEFGKSYLKELK</sequence>
<proteinExistence type="inferred from homology"/>
<name>DEOB_STAAR</name>
<accession>Q6GKG6</accession>
<reference key="1">
    <citation type="journal article" date="2004" name="Proc. Natl. Acad. Sci. U.S.A.">
        <title>Complete genomes of two clinical Staphylococcus aureus strains: evidence for the rapid evolution of virulence and drug resistance.</title>
        <authorList>
            <person name="Holden M.T.G."/>
            <person name="Feil E.J."/>
            <person name="Lindsay J.A."/>
            <person name="Peacock S.J."/>
            <person name="Day N.P.J."/>
            <person name="Enright M.C."/>
            <person name="Foster T.J."/>
            <person name="Moore C.E."/>
            <person name="Hurst L."/>
            <person name="Atkin R."/>
            <person name="Barron A."/>
            <person name="Bason N."/>
            <person name="Bentley S.D."/>
            <person name="Chillingworth C."/>
            <person name="Chillingworth T."/>
            <person name="Churcher C."/>
            <person name="Clark L."/>
            <person name="Corton C."/>
            <person name="Cronin A."/>
            <person name="Doggett J."/>
            <person name="Dowd L."/>
            <person name="Feltwell T."/>
            <person name="Hance Z."/>
            <person name="Harris B."/>
            <person name="Hauser H."/>
            <person name="Holroyd S."/>
            <person name="Jagels K."/>
            <person name="James K.D."/>
            <person name="Lennard N."/>
            <person name="Line A."/>
            <person name="Mayes R."/>
            <person name="Moule S."/>
            <person name="Mungall K."/>
            <person name="Ormond D."/>
            <person name="Quail M.A."/>
            <person name="Rabbinowitsch E."/>
            <person name="Rutherford K.M."/>
            <person name="Sanders M."/>
            <person name="Sharp S."/>
            <person name="Simmonds M."/>
            <person name="Stevens K."/>
            <person name="Whitehead S."/>
            <person name="Barrell B.G."/>
            <person name="Spratt B.G."/>
            <person name="Parkhill J."/>
        </authorList>
    </citation>
    <scope>NUCLEOTIDE SEQUENCE [LARGE SCALE GENOMIC DNA]</scope>
    <source>
        <strain>MRSA252</strain>
    </source>
</reference>
<feature type="chain" id="PRO_0000199842" description="Phosphopentomutase">
    <location>
        <begin position="1"/>
        <end position="392"/>
    </location>
</feature>
<feature type="binding site" evidence="1">
    <location>
        <position position="14"/>
    </location>
    <ligand>
        <name>Mn(2+)</name>
        <dbReference type="ChEBI" id="CHEBI:29035"/>
        <label>1</label>
    </ligand>
</feature>
<feature type="binding site" evidence="1">
    <location>
        <position position="286"/>
    </location>
    <ligand>
        <name>Mn(2+)</name>
        <dbReference type="ChEBI" id="CHEBI:29035"/>
        <label>2</label>
    </ligand>
</feature>
<feature type="binding site" evidence="1">
    <location>
        <position position="291"/>
    </location>
    <ligand>
        <name>Mn(2+)</name>
        <dbReference type="ChEBI" id="CHEBI:29035"/>
        <label>2</label>
    </ligand>
</feature>
<feature type="binding site" evidence="1">
    <location>
        <position position="327"/>
    </location>
    <ligand>
        <name>Mn(2+)</name>
        <dbReference type="ChEBI" id="CHEBI:29035"/>
        <label>1</label>
    </ligand>
</feature>
<feature type="binding site" evidence="1">
    <location>
        <position position="328"/>
    </location>
    <ligand>
        <name>Mn(2+)</name>
        <dbReference type="ChEBI" id="CHEBI:29035"/>
        <label>1</label>
    </ligand>
</feature>
<feature type="binding site" evidence="1">
    <location>
        <position position="339"/>
    </location>
    <ligand>
        <name>Mn(2+)</name>
        <dbReference type="ChEBI" id="CHEBI:29035"/>
        <label>2</label>
    </ligand>
</feature>
<protein>
    <recommendedName>
        <fullName evidence="1">Phosphopentomutase</fullName>
        <ecNumber evidence="1">5.4.2.7</ecNumber>
    </recommendedName>
    <alternativeName>
        <fullName evidence="1">Phosphodeoxyribomutase</fullName>
    </alternativeName>
</protein>
<organism>
    <name type="scientific">Staphylococcus aureus (strain MRSA252)</name>
    <dbReference type="NCBI Taxonomy" id="282458"/>
    <lineage>
        <taxon>Bacteria</taxon>
        <taxon>Bacillati</taxon>
        <taxon>Bacillota</taxon>
        <taxon>Bacilli</taxon>
        <taxon>Bacillales</taxon>
        <taxon>Staphylococcaceae</taxon>
        <taxon>Staphylococcus</taxon>
    </lineage>
</organism>
<evidence type="ECO:0000255" key="1">
    <source>
        <dbReference type="HAMAP-Rule" id="MF_00740"/>
    </source>
</evidence>
<gene>
    <name evidence="1" type="primary">deoB</name>
    <name type="synonym">drm</name>
    <name type="ordered locus">SAR0141</name>
</gene>
<keyword id="KW-0963">Cytoplasm</keyword>
<keyword id="KW-0413">Isomerase</keyword>
<keyword id="KW-0464">Manganese</keyword>
<keyword id="KW-0479">Metal-binding</keyword>
<comment type="function">
    <text evidence="1">Isomerase that catalyzes the conversion of deoxy-ribose 1-phosphate (dRib-1-P) and ribose 1-phosphate (Rib-1-P) to deoxy-ribose 5-phosphate (dRib-5-P) and ribose 5-phosphate (Rib-5-P), respectively.</text>
</comment>
<comment type="catalytic activity">
    <reaction evidence="1">
        <text>2-deoxy-alpha-D-ribose 1-phosphate = 2-deoxy-D-ribose 5-phosphate</text>
        <dbReference type="Rhea" id="RHEA:27658"/>
        <dbReference type="ChEBI" id="CHEBI:57259"/>
        <dbReference type="ChEBI" id="CHEBI:62877"/>
        <dbReference type="EC" id="5.4.2.7"/>
    </reaction>
</comment>
<comment type="catalytic activity">
    <reaction evidence="1">
        <text>alpha-D-ribose 1-phosphate = D-ribose 5-phosphate</text>
        <dbReference type="Rhea" id="RHEA:18793"/>
        <dbReference type="ChEBI" id="CHEBI:57720"/>
        <dbReference type="ChEBI" id="CHEBI:78346"/>
        <dbReference type="EC" id="5.4.2.7"/>
    </reaction>
</comment>
<comment type="cofactor">
    <cofactor evidence="1">
        <name>Mn(2+)</name>
        <dbReference type="ChEBI" id="CHEBI:29035"/>
    </cofactor>
    <text evidence="1">Binds 2 manganese ions.</text>
</comment>
<comment type="pathway">
    <text evidence="1">Carbohydrate degradation; 2-deoxy-D-ribose 1-phosphate degradation; D-glyceraldehyde 3-phosphate and acetaldehyde from 2-deoxy-alpha-D-ribose 1-phosphate: step 1/2.</text>
</comment>
<comment type="subcellular location">
    <subcellularLocation>
        <location evidence="1">Cytoplasm</location>
    </subcellularLocation>
</comment>
<comment type="similarity">
    <text evidence="1">Belongs to the phosphopentomutase family.</text>
</comment>
<dbReference type="EC" id="5.4.2.7" evidence="1"/>
<dbReference type="EMBL" id="BX571856">
    <property type="protein sequence ID" value="CAG39168.1"/>
    <property type="molecule type" value="Genomic_DNA"/>
</dbReference>
<dbReference type="RefSeq" id="WP_000197806.1">
    <property type="nucleotide sequence ID" value="NC_002952.2"/>
</dbReference>
<dbReference type="SMR" id="Q6GKG6"/>
<dbReference type="KEGG" id="sar:SAR0141"/>
<dbReference type="HOGENOM" id="CLU_053861_0_0_9"/>
<dbReference type="UniPathway" id="UPA00002">
    <property type="reaction ID" value="UER00467"/>
</dbReference>
<dbReference type="Proteomes" id="UP000000596">
    <property type="component" value="Chromosome"/>
</dbReference>
<dbReference type="GO" id="GO:0005829">
    <property type="term" value="C:cytosol"/>
    <property type="evidence" value="ECO:0007669"/>
    <property type="project" value="TreeGrafter"/>
</dbReference>
<dbReference type="GO" id="GO:0000287">
    <property type="term" value="F:magnesium ion binding"/>
    <property type="evidence" value="ECO:0007669"/>
    <property type="project" value="InterPro"/>
</dbReference>
<dbReference type="GO" id="GO:0030145">
    <property type="term" value="F:manganese ion binding"/>
    <property type="evidence" value="ECO:0007669"/>
    <property type="project" value="UniProtKB-UniRule"/>
</dbReference>
<dbReference type="GO" id="GO:0008973">
    <property type="term" value="F:phosphopentomutase activity"/>
    <property type="evidence" value="ECO:0007669"/>
    <property type="project" value="UniProtKB-UniRule"/>
</dbReference>
<dbReference type="GO" id="GO:0006018">
    <property type="term" value="P:2-deoxyribose 1-phosphate catabolic process"/>
    <property type="evidence" value="ECO:0007669"/>
    <property type="project" value="UniProtKB-UniRule"/>
</dbReference>
<dbReference type="GO" id="GO:0006015">
    <property type="term" value="P:5-phosphoribose 1-diphosphate biosynthetic process"/>
    <property type="evidence" value="ECO:0007669"/>
    <property type="project" value="UniProtKB-UniPathway"/>
</dbReference>
<dbReference type="GO" id="GO:0043094">
    <property type="term" value="P:metabolic compound salvage"/>
    <property type="evidence" value="ECO:0007669"/>
    <property type="project" value="InterPro"/>
</dbReference>
<dbReference type="GO" id="GO:0009117">
    <property type="term" value="P:nucleotide metabolic process"/>
    <property type="evidence" value="ECO:0007669"/>
    <property type="project" value="InterPro"/>
</dbReference>
<dbReference type="CDD" id="cd16009">
    <property type="entry name" value="PPM"/>
    <property type="match status" value="1"/>
</dbReference>
<dbReference type="FunFam" id="3.30.70.1250:FF:000001">
    <property type="entry name" value="Phosphopentomutase"/>
    <property type="match status" value="1"/>
</dbReference>
<dbReference type="Gene3D" id="3.40.720.10">
    <property type="entry name" value="Alkaline Phosphatase, subunit A"/>
    <property type="match status" value="1"/>
</dbReference>
<dbReference type="Gene3D" id="3.30.70.1250">
    <property type="entry name" value="Phosphopentomutase"/>
    <property type="match status" value="1"/>
</dbReference>
<dbReference type="HAMAP" id="MF_00740">
    <property type="entry name" value="Phosphopentomut"/>
    <property type="match status" value="1"/>
</dbReference>
<dbReference type="InterPro" id="IPR017850">
    <property type="entry name" value="Alkaline_phosphatase_core_sf"/>
</dbReference>
<dbReference type="InterPro" id="IPR010045">
    <property type="entry name" value="DeoB"/>
</dbReference>
<dbReference type="InterPro" id="IPR006124">
    <property type="entry name" value="Metalloenzyme"/>
</dbReference>
<dbReference type="InterPro" id="IPR024052">
    <property type="entry name" value="Phosphopentomutase_DeoB_cap_sf"/>
</dbReference>
<dbReference type="NCBIfam" id="TIGR01696">
    <property type="entry name" value="deoB"/>
    <property type="match status" value="1"/>
</dbReference>
<dbReference type="NCBIfam" id="NF003766">
    <property type="entry name" value="PRK05362.1"/>
    <property type="match status" value="1"/>
</dbReference>
<dbReference type="PANTHER" id="PTHR21110">
    <property type="entry name" value="PHOSPHOPENTOMUTASE"/>
    <property type="match status" value="1"/>
</dbReference>
<dbReference type="PANTHER" id="PTHR21110:SF0">
    <property type="entry name" value="PHOSPHOPENTOMUTASE"/>
    <property type="match status" value="1"/>
</dbReference>
<dbReference type="Pfam" id="PF01676">
    <property type="entry name" value="Metalloenzyme"/>
    <property type="match status" value="1"/>
</dbReference>
<dbReference type="PIRSF" id="PIRSF001491">
    <property type="entry name" value="Ppentomutase"/>
    <property type="match status" value="1"/>
</dbReference>
<dbReference type="SUPFAM" id="SSF53649">
    <property type="entry name" value="Alkaline phosphatase-like"/>
    <property type="match status" value="1"/>
</dbReference>
<dbReference type="SUPFAM" id="SSF143856">
    <property type="entry name" value="DeoB insert domain-like"/>
    <property type="match status" value="1"/>
</dbReference>